<keyword id="KW-0004">4Fe-4S</keyword>
<keyword id="KW-0997">Cell inner membrane</keyword>
<keyword id="KW-1003">Cell membrane</keyword>
<keyword id="KW-0408">Iron</keyword>
<keyword id="KW-0411">Iron-sulfur</keyword>
<keyword id="KW-0472">Membrane</keyword>
<keyword id="KW-0479">Metal-binding</keyword>
<keyword id="KW-0520">NAD</keyword>
<keyword id="KW-0874">Quinone</keyword>
<keyword id="KW-1185">Reference proteome</keyword>
<keyword id="KW-1278">Translocase</keyword>
<keyword id="KW-0813">Transport</keyword>
<keyword id="KW-0830">Ubiquinone</keyword>
<sequence length="160" mass="17635">MAIEGVLNEGFVTTTADKLINWTRTGSLWPMTFGLACCAVEMMHAGAARYDMDRFGVIFRPSPRQSDVMIVAGTLCNKMAPALRKVYDQMAEPRWVISMGSCANGGGYYHYSYSVVRGCDRIVPVDIYVPGCPPTAEALIYGVIQLQNKIKRTNTIARKG</sequence>
<dbReference type="EC" id="7.1.1.-" evidence="2"/>
<dbReference type="EMBL" id="CP000352">
    <property type="protein sequence ID" value="ABF07814.1"/>
    <property type="molecule type" value="Genomic_DNA"/>
</dbReference>
<dbReference type="RefSeq" id="WP_008643342.1">
    <property type="nucleotide sequence ID" value="NC_007973.1"/>
</dbReference>
<dbReference type="SMR" id="Q1LPW2"/>
<dbReference type="STRING" id="266264.Rmet_0928"/>
<dbReference type="KEGG" id="rme:Rmet_0928"/>
<dbReference type="eggNOG" id="COG0377">
    <property type="taxonomic scope" value="Bacteria"/>
</dbReference>
<dbReference type="HOGENOM" id="CLU_055737_7_3_4"/>
<dbReference type="Proteomes" id="UP000002429">
    <property type="component" value="Chromosome"/>
</dbReference>
<dbReference type="GO" id="GO:0005886">
    <property type="term" value="C:plasma membrane"/>
    <property type="evidence" value="ECO:0007669"/>
    <property type="project" value="UniProtKB-SubCell"/>
</dbReference>
<dbReference type="GO" id="GO:0045271">
    <property type="term" value="C:respiratory chain complex I"/>
    <property type="evidence" value="ECO:0007669"/>
    <property type="project" value="TreeGrafter"/>
</dbReference>
<dbReference type="GO" id="GO:0051539">
    <property type="term" value="F:4 iron, 4 sulfur cluster binding"/>
    <property type="evidence" value="ECO:0007669"/>
    <property type="project" value="UniProtKB-KW"/>
</dbReference>
<dbReference type="GO" id="GO:0005506">
    <property type="term" value="F:iron ion binding"/>
    <property type="evidence" value="ECO:0007669"/>
    <property type="project" value="UniProtKB-UniRule"/>
</dbReference>
<dbReference type="GO" id="GO:0008137">
    <property type="term" value="F:NADH dehydrogenase (ubiquinone) activity"/>
    <property type="evidence" value="ECO:0007669"/>
    <property type="project" value="InterPro"/>
</dbReference>
<dbReference type="GO" id="GO:0050136">
    <property type="term" value="F:NADH:ubiquinone reductase (non-electrogenic) activity"/>
    <property type="evidence" value="ECO:0007669"/>
    <property type="project" value="UniProtKB-UniRule"/>
</dbReference>
<dbReference type="GO" id="GO:0048038">
    <property type="term" value="F:quinone binding"/>
    <property type="evidence" value="ECO:0007669"/>
    <property type="project" value="UniProtKB-KW"/>
</dbReference>
<dbReference type="GO" id="GO:0009060">
    <property type="term" value="P:aerobic respiration"/>
    <property type="evidence" value="ECO:0007669"/>
    <property type="project" value="TreeGrafter"/>
</dbReference>
<dbReference type="GO" id="GO:0015990">
    <property type="term" value="P:electron transport coupled proton transport"/>
    <property type="evidence" value="ECO:0007669"/>
    <property type="project" value="TreeGrafter"/>
</dbReference>
<dbReference type="FunFam" id="3.40.50.12280:FF:000001">
    <property type="entry name" value="NADH-quinone oxidoreductase subunit B 2"/>
    <property type="match status" value="1"/>
</dbReference>
<dbReference type="Gene3D" id="3.40.50.12280">
    <property type="match status" value="1"/>
</dbReference>
<dbReference type="HAMAP" id="MF_01356">
    <property type="entry name" value="NDH1_NuoB"/>
    <property type="match status" value="1"/>
</dbReference>
<dbReference type="InterPro" id="IPR006137">
    <property type="entry name" value="NADH_UbQ_OxRdtase-like_20kDa"/>
</dbReference>
<dbReference type="InterPro" id="IPR006138">
    <property type="entry name" value="NADH_UQ_OxRdtase_20Kd_su"/>
</dbReference>
<dbReference type="NCBIfam" id="TIGR01957">
    <property type="entry name" value="nuoB_fam"/>
    <property type="match status" value="1"/>
</dbReference>
<dbReference type="NCBIfam" id="NF005012">
    <property type="entry name" value="PRK06411.1"/>
    <property type="match status" value="1"/>
</dbReference>
<dbReference type="PANTHER" id="PTHR11995">
    <property type="entry name" value="NADH DEHYDROGENASE"/>
    <property type="match status" value="1"/>
</dbReference>
<dbReference type="PANTHER" id="PTHR11995:SF14">
    <property type="entry name" value="NADH DEHYDROGENASE [UBIQUINONE] IRON-SULFUR PROTEIN 7, MITOCHONDRIAL"/>
    <property type="match status" value="1"/>
</dbReference>
<dbReference type="Pfam" id="PF01058">
    <property type="entry name" value="Oxidored_q6"/>
    <property type="match status" value="1"/>
</dbReference>
<dbReference type="SUPFAM" id="SSF56770">
    <property type="entry name" value="HydA/Nqo6-like"/>
    <property type="match status" value="1"/>
</dbReference>
<dbReference type="PROSITE" id="PS01150">
    <property type="entry name" value="COMPLEX1_20K"/>
    <property type="match status" value="1"/>
</dbReference>
<comment type="function">
    <text evidence="1">NDH-1 shuttles electrons from NADH, via FMN and iron-sulfur (Fe-S) centers, to quinones in the respiratory chain. Couples the redox reaction to proton translocation (for every two electrons transferred, four hydrogen ions are translocated across the cytoplasmic membrane), and thus conserves the redox energy in a proton gradient (By similarity).</text>
</comment>
<comment type="catalytic activity">
    <reaction evidence="2">
        <text>a quinone + NADH + 5 H(+)(in) = a quinol + NAD(+) + 4 H(+)(out)</text>
        <dbReference type="Rhea" id="RHEA:57888"/>
        <dbReference type="ChEBI" id="CHEBI:15378"/>
        <dbReference type="ChEBI" id="CHEBI:24646"/>
        <dbReference type="ChEBI" id="CHEBI:57540"/>
        <dbReference type="ChEBI" id="CHEBI:57945"/>
        <dbReference type="ChEBI" id="CHEBI:132124"/>
    </reaction>
</comment>
<comment type="cofactor">
    <cofactor evidence="2">
        <name>[4Fe-4S] cluster</name>
        <dbReference type="ChEBI" id="CHEBI:49883"/>
    </cofactor>
    <text evidence="2">Binds 1 [4Fe-4S] cluster.</text>
</comment>
<comment type="subunit">
    <text evidence="2">NDH-1 is composed of 14 different subunits. Subunits NuoB, C, D, E, F, and G constitute the peripheral sector of the complex.</text>
</comment>
<comment type="subcellular location">
    <subcellularLocation>
        <location evidence="2">Cell inner membrane</location>
        <topology evidence="2">Peripheral membrane protein</topology>
        <orientation evidence="2">Cytoplasmic side</orientation>
    </subcellularLocation>
</comment>
<comment type="similarity">
    <text evidence="2">Belongs to the complex I 20 kDa subunit family.</text>
</comment>
<proteinExistence type="inferred from homology"/>
<accession>Q1LPW2</accession>
<protein>
    <recommendedName>
        <fullName evidence="2">NADH-quinone oxidoreductase subunit B</fullName>
        <ecNumber evidence="2">7.1.1.-</ecNumber>
    </recommendedName>
    <alternativeName>
        <fullName evidence="2">NADH dehydrogenase I subunit B</fullName>
    </alternativeName>
    <alternativeName>
        <fullName evidence="2">NDH-1 subunit B</fullName>
    </alternativeName>
</protein>
<reference key="1">
    <citation type="journal article" date="2010" name="PLoS ONE">
        <title>The complete genome sequence of Cupriavidus metallidurans strain CH34, a master survivalist in harsh and anthropogenic environments.</title>
        <authorList>
            <person name="Janssen P.J."/>
            <person name="Van Houdt R."/>
            <person name="Moors H."/>
            <person name="Monsieurs P."/>
            <person name="Morin N."/>
            <person name="Michaux A."/>
            <person name="Benotmane M.A."/>
            <person name="Leys N."/>
            <person name="Vallaeys T."/>
            <person name="Lapidus A."/>
            <person name="Monchy S."/>
            <person name="Medigue C."/>
            <person name="Taghavi S."/>
            <person name="McCorkle S."/>
            <person name="Dunn J."/>
            <person name="van der Lelie D."/>
            <person name="Mergeay M."/>
        </authorList>
    </citation>
    <scope>NUCLEOTIDE SEQUENCE [LARGE SCALE GENOMIC DNA]</scope>
    <source>
        <strain>ATCC 43123 / DSM 2839 / NBRC 102507 / CH34</strain>
    </source>
</reference>
<name>NUOB_CUPMC</name>
<evidence type="ECO:0000250" key="1"/>
<evidence type="ECO:0000255" key="2">
    <source>
        <dbReference type="HAMAP-Rule" id="MF_01356"/>
    </source>
</evidence>
<feature type="chain" id="PRO_0000358462" description="NADH-quinone oxidoreductase subunit B">
    <location>
        <begin position="1"/>
        <end position="160"/>
    </location>
</feature>
<feature type="binding site" evidence="2">
    <location>
        <position position="37"/>
    </location>
    <ligand>
        <name>[4Fe-4S] cluster</name>
        <dbReference type="ChEBI" id="CHEBI:49883"/>
    </ligand>
</feature>
<feature type="binding site" evidence="2">
    <location>
        <position position="38"/>
    </location>
    <ligand>
        <name>[4Fe-4S] cluster</name>
        <dbReference type="ChEBI" id="CHEBI:49883"/>
    </ligand>
</feature>
<feature type="binding site" evidence="2">
    <location>
        <position position="102"/>
    </location>
    <ligand>
        <name>[4Fe-4S] cluster</name>
        <dbReference type="ChEBI" id="CHEBI:49883"/>
    </ligand>
</feature>
<feature type="binding site" evidence="2">
    <location>
        <position position="132"/>
    </location>
    <ligand>
        <name>[4Fe-4S] cluster</name>
        <dbReference type="ChEBI" id="CHEBI:49883"/>
    </ligand>
</feature>
<gene>
    <name evidence="2" type="primary">nuoB</name>
    <name type="ordered locus">Rmet_0928</name>
</gene>
<organism>
    <name type="scientific">Cupriavidus metallidurans (strain ATCC 43123 / DSM 2839 / NBRC 102507 / CH34)</name>
    <name type="common">Ralstonia metallidurans</name>
    <dbReference type="NCBI Taxonomy" id="266264"/>
    <lineage>
        <taxon>Bacteria</taxon>
        <taxon>Pseudomonadati</taxon>
        <taxon>Pseudomonadota</taxon>
        <taxon>Betaproteobacteria</taxon>
        <taxon>Burkholderiales</taxon>
        <taxon>Burkholderiaceae</taxon>
        <taxon>Cupriavidus</taxon>
    </lineage>
</organism>